<protein>
    <recommendedName>
        <fullName>Protein rot1</fullName>
    </recommendedName>
</protein>
<gene>
    <name type="primary">rot1</name>
    <name type="ORF">An07g01540</name>
</gene>
<sequence>MATYFFLGLLLTAVGTSSSSSASDLEGTWTTKSRQVVTGPGFYDPIGDKFLEPNLTGISYSFSADGHYEEAYYRAIANPQDPSCPKGVMQWQHGTYTVNSDGSVDLTPIAVDGRQLLSDPCQSSTGTYTRYNQTEHFESFAVSVDSYHGVQRLDVKNFDGSPMHPMYLIYKPPQMLPTQTLNPSSSSKSKRQVEGGTGGRFSIKDLVSREKVGDPNNWLWLGIFMTTLGGITFFRS</sequence>
<reference key="1">
    <citation type="journal article" date="2007" name="Nat. Biotechnol.">
        <title>Genome sequencing and analysis of the versatile cell factory Aspergillus niger CBS 513.88.</title>
        <authorList>
            <person name="Pel H.J."/>
            <person name="de Winde J.H."/>
            <person name="Archer D.B."/>
            <person name="Dyer P.S."/>
            <person name="Hofmann G."/>
            <person name="Schaap P.J."/>
            <person name="Turner G."/>
            <person name="de Vries R.P."/>
            <person name="Albang R."/>
            <person name="Albermann K."/>
            <person name="Andersen M.R."/>
            <person name="Bendtsen J.D."/>
            <person name="Benen J.A.E."/>
            <person name="van den Berg M."/>
            <person name="Breestraat S."/>
            <person name="Caddick M.X."/>
            <person name="Contreras R."/>
            <person name="Cornell M."/>
            <person name="Coutinho P.M."/>
            <person name="Danchin E.G.J."/>
            <person name="Debets A.J.M."/>
            <person name="Dekker P."/>
            <person name="van Dijck P.W.M."/>
            <person name="van Dijk A."/>
            <person name="Dijkhuizen L."/>
            <person name="Driessen A.J.M."/>
            <person name="d'Enfert C."/>
            <person name="Geysens S."/>
            <person name="Goosen C."/>
            <person name="Groot G.S.P."/>
            <person name="de Groot P.W.J."/>
            <person name="Guillemette T."/>
            <person name="Henrissat B."/>
            <person name="Herweijer M."/>
            <person name="van den Hombergh J.P.T.W."/>
            <person name="van den Hondel C.A.M.J.J."/>
            <person name="van der Heijden R.T.J.M."/>
            <person name="van der Kaaij R.M."/>
            <person name="Klis F.M."/>
            <person name="Kools H.J."/>
            <person name="Kubicek C.P."/>
            <person name="van Kuyk P.A."/>
            <person name="Lauber J."/>
            <person name="Lu X."/>
            <person name="van der Maarel M.J.E.C."/>
            <person name="Meulenberg R."/>
            <person name="Menke H."/>
            <person name="Mortimer M.A."/>
            <person name="Nielsen J."/>
            <person name="Oliver S.G."/>
            <person name="Olsthoorn M."/>
            <person name="Pal K."/>
            <person name="van Peij N.N.M.E."/>
            <person name="Ram A.F.J."/>
            <person name="Rinas U."/>
            <person name="Roubos J.A."/>
            <person name="Sagt C.M.J."/>
            <person name="Schmoll M."/>
            <person name="Sun J."/>
            <person name="Ussery D."/>
            <person name="Varga J."/>
            <person name="Vervecken W."/>
            <person name="van de Vondervoort P.J.J."/>
            <person name="Wedler H."/>
            <person name="Woesten H.A.B."/>
            <person name="Zeng A.-P."/>
            <person name="van Ooyen A.J.J."/>
            <person name="Visser J."/>
            <person name="Stam H."/>
        </authorList>
    </citation>
    <scope>NUCLEOTIDE SEQUENCE [LARGE SCALE GENOMIC DNA]</scope>
    <source>
        <strain>ATCC MYA-4892 / CBS 513.88 / FGSC A1513</strain>
    </source>
</reference>
<accession>A2QMB8</accession>
<evidence type="ECO:0000250" key="1"/>
<evidence type="ECO:0000255" key="2"/>
<evidence type="ECO:0000256" key="3">
    <source>
        <dbReference type="SAM" id="MobiDB-lite"/>
    </source>
</evidence>
<evidence type="ECO:0000305" key="4"/>
<dbReference type="EMBL" id="AM270120">
    <property type="protein sequence ID" value="CAK96599.1"/>
    <property type="molecule type" value="Genomic_DNA"/>
</dbReference>
<dbReference type="RefSeq" id="XP_001391241.2">
    <property type="nucleotide sequence ID" value="XM_001391204.2"/>
</dbReference>
<dbReference type="GlyCosmos" id="A2QMB8">
    <property type="glycosylation" value="2 sites, No reported glycans"/>
</dbReference>
<dbReference type="EnsemblFungi" id="CAK96599">
    <property type="protein sequence ID" value="CAK96599"/>
    <property type="gene ID" value="An07g01540"/>
</dbReference>
<dbReference type="GeneID" id="4981421"/>
<dbReference type="KEGG" id="ang:An07g01540"/>
<dbReference type="VEuPathDB" id="FungiDB:An07g01540"/>
<dbReference type="HOGENOM" id="CLU_071622_0_0_1"/>
<dbReference type="Proteomes" id="UP000006706">
    <property type="component" value="Chromosome 4L"/>
</dbReference>
<dbReference type="GO" id="GO:0005789">
    <property type="term" value="C:endoplasmic reticulum membrane"/>
    <property type="evidence" value="ECO:0007669"/>
    <property type="project" value="UniProtKB-SubCell"/>
</dbReference>
<dbReference type="GO" id="GO:0051082">
    <property type="term" value="F:unfolded protein binding"/>
    <property type="evidence" value="ECO:0007669"/>
    <property type="project" value="TreeGrafter"/>
</dbReference>
<dbReference type="GO" id="GO:0006458">
    <property type="term" value="P:'de novo' protein folding"/>
    <property type="evidence" value="ECO:0007669"/>
    <property type="project" value="InterPro"/>
</dbReference>
<dbReference type="InterPro" id="IPR019623">
    <property type="entry name" value="Rot1"/>
</dbReference>
<dbReference type="PANTHER" id="PTHR28090">
    <property type="entry name" value="PROTEIN ROT1"/>
    <property type="match status" value="1"/>
</dbReference>
<dbReference type="PANTHER" id="PTHR28090:SF1">
    <property type="entry name" value="PROTEIN ROT1"/>
    <property type="match status" value="1"/>
</dbReference>
<dbReference type="Pfam" id="PF10681">
    <property type="entry name" value="Rot1"/>
    <property type="match status" value="1"/>
</dbReference>
<dbReference type="PIRSF" id="PIRSF017290">
    <property type="entry name" value="ROT1_prd"/>
    <property type="match status" value="1"/>
</dbReference>
<keyword id="KW-0256">Endoplasmic reticulum</keyword>
<keyword id="KW-0325">Glycoprotein</keyword>
<keyword id="KW-0472">Membrane</keyword>
<keyword id="KW-1185">Reference proteome</keyword>
<keyword id="KW-0732">Signal</keyword>
<keyword id="KW-0812">Transmembrane</keyword>
<keyword id="KW-1133">Transmembrane helix</keyword>
<feature type="signal peptide" evidence="2">
    <location>
        <begin position="1"/>
        <end position="22"/>
    </location>
</feature>
<feature type="chain" id="PRO_5000220114" description="Protein rot1">
    <location>
        <begin position="23"/>
        <end position="236"/>
    </location>
</feature>
<feature type="topological domain" description="Lumenal" evidence="2">
    <location>
        <begin position="23"/>
        <end position="217"/>
    </location>
</feature>
<feature type="transmembrane region" description="Helical" evidence="2">
    <location>
        <begin position="218"/>
        <end position="234"/>
    </location>
</feature>
<feature type="topological domain" description="Cytoplasmic" evidence="2">
    <location>
        <begin position="235"/>
        <end position="236"/>
    </location>
</feature>
<feature type="region of interest" description="Disordered" evidence="3">
    <location>
        <begin position="178"/>
        <end position="197"/>
    </location>
</feature>
<feature type="compositionally biased region" description="Polar residues" evidence="3">
    <location>
        <begin position="178"/>
        <end position="187"/>
    </location>
</feature>
<feature type="glycosylation site" description="N-linked (GlcNAc...) asparagine" evidence="2">
    <location>
        <position position="54"/>
    </location>
</feature>
<feature type="glycosylation site" description="N-linked (GlcNAc...) asparagine" evidence="2">
    <location>
        <position position="132"/>
    </location>
</feature>
<comment type="function">
    <text evidence="1">Required for normal levels of the cell wall 1,6-beta-glucan. Involved in a protein folding machinery chaperoning proteins acting in various physiological processes including cell wall synthesis and lysis of autophagic bodies (By similarity).</text>
</comment>
<comment type="subcellular location">
    <subcellularLocation>
        <location evidence="1">Endoplasmic reticulum membrane</location>
        <topology evidence="1">Single-pass type I membrane protein</topology>
    </subcellularLocation>
</comment>
<comment type="similarity">
    <text evidence="4">Belongs to the ROT1 family.</text>
</comment>
<organism>
    <name type="scientific">Aspergillus niger (strain ATCC MYA-4892 / CBS 513.88 / FGSC A1513)</name>
    <dbReference type="NCBI Taxonomy" id="425011"/>
    <lineage>
        <taxon>Eukaryota</taxon>
        <taxon>Fungi</taxon>
        <taxon>Dikarya</taxon>
        <taxon>Ascomycota</taxon>
        <taxon>Pezizomycotina</taxon>
        <taxon>Eurotiomycetes</taxon>
        <taxon>Eurotiomycetidae</taxon>
        <taxon>Eurotiales</taxon>
        <taxon>Aspergillaceae</taxon>
        <taxon>Aspergillus</taxon>
        <taxon>Aspergillus subgen. Circumdati</taxon>
    </lineage>
</organism>
<proteinExistence type="inferred from homology"/>
<name>ROT1_ASPNC</name>